<name>LIPB_YERP3</name>
<sequence length="233" mass="26009">MMPRLQQHKIILRQLGLQPYAPVSQAMHNFTEFRTDTTPDEIWLVEHQHVFTQGQAGKAEHVLMPGDIPVIQSDRGGQITYHGPGQQVMYVMVDLKRAKIGVRQLVTAIENTVIETLAHFNIDSHARPDAPGVYVEQQKICSLGLRIRRGCSFHGLALNIAMDLEPFQRINPCGYAGMQMTQVSALQPGVTVADVQPVLVREFTRQLGYPTAKLQPWSLSDYLLSSHSSSSVL</sequence>
<feature type="chain" id="PRO_1000057111" description="Octanoyltransferase">
    <location>
        <begin position="1"/>
        <end position="233"/>
    </location>
</feature>
<feature type="domain" description="BPL/LPL catalytic" evidence="2">
    <location>
        <begin position="36"/>
        <end position="211"/>
    </location>
</feature>
<feature type="active site" description="Acyl-thioester intermediate" evidence="1">
    <location>
        <position position="173"/>
    </location>
</feature>
<feature type="binding site" evidence="1">
    <location>
        <begin position="75"/>
        <end position="82"/>
    </location>
    <ligand>
        <name>substrate</name>
    </ligand>
</feature>
<feature type="binding site" evidence="1">
    <location>
        <begin position="142"/>
        <end position="144"/>
    </location>
    <ligand>
        <name>substrate</name>
    </ligand>
</feature>
<feature type="binding site" evidence="1">
    <location>
        <begin position="155"/>
        <end position="157"/>
    </location>
    <ligand>
        <name>substrate</name>
    </ligand>
</feature>
<feature type="site" description="Lowers pKa of active site Cys" evidence="1">
    <location>
        <position position="139"/>
    </location>
</feature>
<comment type="function">
    <text evidence="1">Catalyzes the transfer of endogenously produced octanoic acid from octanoyl-acyl-carrier-protein onto the lipoyl domains of lipoate-dependent enzymes. Lipoyl-ACP can also act as a substrate although octanoyl-ACP is likely to be the physiological substrate.</text>
</comment>
<comment type="catalytic activity">
    <reaction evidence="1">
        <text>octanoyl-[ACP] + L-lysyl-[protein] = N(6)-octanoyl-L-lysyl-[protein] + holo-[ACP] + H(+)</text>
        <dbReference type="Rhea" id="RHEA:17665"/>
        <dbReference type="Rhea" id="RHEA-COMP:9636"/>
        <dbReference type="Rhea" id="RHEA-COMP:9685"/>
        <dbReference type="Rhea" id="RHEA-COMP:9752"/>
        <dbReference type="Rhea" id="RHEA-COMP:9928"/>
        <dbReference type="ChEBI" id="CHEBI:15378"/>
        <dbReference type="ChEBI" id="CHEBI:29969"/>
        <dbReference type="ChEBI" id="CHEBI:64479"/>
        <dbReference type="ChEBI" id="CHEBI:78463"/>
        <dbReference type="ChEBI" id="CHEBI:78809"/>
        <dbReference type="EC" id="2.3.1.181"/>
    </reaction>
</comment>
<comment type="pathway">
    <text evidence="1">Protein modification; protein lipoylation via endogenous pathway; protein N(6)-(lipoyl)lysine from octanoyl-[acyl-carrier-protein]: step 1/2.</text>
</comment>
<comment type="subcellular location">
    <subcellularLocation>
        <location evidence="1">Cytoplasm</location>
    </subcellularLocation>
</comment>
<comment type="miscellaneous">
    <text evidence="1">In the reaction, the free carboxyl group of octanoic acid is attached via an amide linkage to the epsilon-amino group of a specific lysine residue of lipoyl domains of lipoate-dependent enzymes.</text>
</comment>
<comment type="similarity">
    <text evidence="1">Belongs to the LipB family.</text>
</comment>
<organism>
    <name type="scientific">Yersinia pseudotuberculosis serotype O:1b (strain IP 31758)</name>
    <dbReference type="NCBI Taxonomy" id="349747"/>
    <lineage>
        <taxon>Bacteria</taxon>
        <taxon>Pseudomonadati</taxon>
        <taxon>Pseudomonadota</taxon>
        <taxon>Gammaproteobacteria</taxon>
        <taxon>Enterobacterales</taxon>
        <taxon>Yersiniaceae</taxon>
        <taxon>Yersinia</taxon>
    </lineage>
</organism>
<dbReference type="EC" id="2.3.1.181" evidence="1"/>
<dbReference type="EMBL" id="CP000720">
    <property type="protein sequence ID" value="ABS49799.1"/>
    <property type="molecule type" value="Genomic_DNA"/>
</dbReference>
<dbReference type="RefSeq" id="WP_012105524.1">
    <property type="nucleotide sequence ID" value="NC_009708.1"/>
</dbReference>
<dbReference type="SMR" id="A7FKY8"/>
<dbReference type="KEGG" id="ypi:YpsIP31758_2954"/>
<dbReference type="HOGENOM" id="CLU_035168_3_1_6"/>
<dbReference type="UniPathway" id="UPA00538">
    <property type="reaction ID" value="UER00592"/>
</dbReference>
<dbReference type="Proteomes" id="UP000002412">
    <property type="component" value="Chromosome"/>
</dbReference>
<dbReference type="GO" id="GO:0005737">
    <property type="term" value="C:cytoplasm"/>
    <property type="evidence" value="ECO:0007669"/>
    <property type="project" value="UniProtKB-SubCell"/>
</dbReference>
<dbReference type="GO" id="GO:0033819">
    <property type="term" value="F:lipoyl(octanoyl) transferase activity"/>
    <property type="evidence" value="ECO:0007669"/>
    <property type="project" value="UniProtKB-EC"/>
</dbReference>
<dbReference type="GO" id="GO:0036211">
    <property type="term" value="P:protein modification process"/>
    <property type="evidence" value="ECO:0007669"/>
    <property type="project" value="InterPro"/>
</dbReference>
<dbReference type="CDD" id="cd16444">
    <property type="entry name" value="LipB"/>
    <property type="match status" value="1"/>
</dbReference>
<dbReference type="FunFam" id="3.30.930.10:FF:000020">
    <property type="entry name" value="Octanoyltransferase"/>
    <property type="match status" value="1"/>
</dbReference>
<dbReference type="Gene3D" id="3.30.930.10">
    <property type="entry name" value="Bira Bifunctional Protein, Domain 2"/>
    <property type="match status" value="1"/>
</dbReference>
<dbReference type="HAMAP" id="MF_00013">
    <property type="entry name" value="LipB"/>
    <property type="match status" value="1"/>
</dbReference>
<dbReference type="InterPro" id="IPR045864">
    <property type="entry name" value="aa-tRNA-synth_II/BPL/LPL"/>
</dbReference>
<dbReference type="InterPro" id="IPR004143">
    <property type="entry name" value="BPL_LPL_catalytic"/>
</dbReference>
<dbReference type="InterPro" id="IPR000544">
    <property type="entry name" value="Octanoyltransferase"/>
</dbReference>
<dbReference type="InterPro" id="IPR020605">
    <property type="entry name" value="Octanoyltransferase_CS"/>
</dbReference>
<dbReference type="NCBIfam" id="TIGR00214">
    <property type="entry name" value="lipB"/>
    <property type="match status" value="1"/>
</dbReference>
<dbReference type="NCBIfam" id="NF010922">
    <property type="entry name" value="PRK14342.1"/>
    <property type="match status" value="1"/>
</dbReference>
<dbReference type="PANTHER" id="PTHR10993:SF7">
    <property type="entry name" value="LIPOYLTRANSFERASE 2, MITOCHONDRIAL-RELATED"/>
    <property type="match status" value="1"/>
</dbReference>
<dbReference type="PANTHER" id="PTHR10993">
    <property type="entry name" value="OCTANOYLTRANSFERASE"/>
    <property type="match status" value="1"/>
</dbReference>
<dbReference type="Pfam" id="PF21948">
    <property type="entry name" value="LplA-B_cat"/>
    <property type="match status" value="1"/>
</dbReference>
<dbReference type="PIRSF" id="PIRSF016262">
    <property type="entry name" value="LPLase"/>
    <property type="match status" value="1"/>
</dbReference>
<dbReference type="SUPFAM" id="SSF55681">
    <property type="entry name" value="Class II aaRS and biotin synthetases"/>
    <property type="match status" value="1"/>
</dbReference>
<dbReference type="PROSITE" id="PS51733">
    <property type="entry name" value="BPL_LPL_CATALYTIC"/>
    <property type="match status" value="1"/>
</dbReference>
<dbReference type="PROSITE" id="PS01313">
    <property type="entry name" value="LIPB"/>
    <property type="match status" value="1"/>
</dbReference>
<proteinExistence type="inferred from homology"/>
<evidence type="ECO:0000255" key="1">
    <source>
        <dbReference type="HAMAP-Rule" id="MF_00013"/>
    </source>
</evidence>
<evidence type="ECO:0000255" key="2">
    <source>
        <dbReference type="PROSITE-ProRule" id="PRU01067"/>
    </source>
</evidence>
<gene>
    <name evidence="1" type="primary">lipB</name>
    <name type="ordered locus">YpsIP31758_2954</name>
</gene>
<accession>A7FKY8</accession>
<protein>
    <recommendedName>
        <fullName evidence="1">Octanoyltransferase</fullName>
        <ecNumber evidence="1">2.3.1.181</ecNumber>
    </recommendedName>
    <alternativeName>
        <fullName evidence="1">Lipoate-protein ligase B</fullName>
    </alternativeName>
    <alternativeName>
        <fullName evidence="1">Lipoyl/octanoyl transferase</fullName>
    </alternativeName>
    <alternativeName>
        <fullName evidence="1">Octanoyl-[acyl-carrier-protein]-protein N-octanoyltransferase</fullName>
    </alternativeName>
</protein>
<reference key="1">
    <citation type="journal article" date="2007" name="PLoS Genet.">
        <title>The complete genome sequence of Yersinia pseudotuberculosis IP31758, the causative agent of Far East scarlet-like fever.</title>
        <authorList>
            <person name="Eppinger M."/>
            <person name="Rosovitz M.J."/>
            <person name="Fricke W.F."/>
            <person name="Rasko D.A."/>
            <person name="Kokorina G."/>
            <person name="Fayolle C."/>
            <person name="Lindler L.E."/>
            <person name="Carniel E."/>
            <person name="Ravel J."/>
        </authorList>
    </citation>
    <scope>NUCLEOTIDE SEQUENCE [LARGE SCALE GENOMIC DNA]</scope>
    <source>
        <strain>IP 31758</strain>
    </source>
</reference>
<keyword id="KW-0012">Acyltransferase</keyword>
<keyword id="KW-0963">Cytoplasm</keyword>
<keyword id="KW-0808">Transferase</keyword>